<gene>
    <name type="primary">atp6</name>
    <name type="ORF">DDB_G0294014</name>
</gene>
<feature type="chain" id="PRO_0000312373" description="ATP synthase subunit a">
    <location>
        <begin position="1"/>
        <end position="244"/>
    </location>
</feature>
<feature type="transmembrane region" description="Helical" evidence="2">
    <location>
        <begin position="20"/>
        <end position="40"/>
    </location>
</feature>
<feature type="transmembrane region" description="Helical" evidence="2">
    <location>
        <begin position="81"/>
        <end position="101"/>
    </location>
</feature>
<feature type="transmembrane region" description="Helical" evidence="2">
    <location>
        <begin position="113"/>
        <end position="133"/>
    </location>
</feature>
<feature type="transmembrane region" description="Helical" evidence="2">
    <location>
        <begin position="140"/>
        <end position="160"/>
    </location>
</feature>
<feature type="transmembrane region" description="Helical" evidence="2">
    <location>
        <begin position="176"/>
        <end position="196"/>
    </location>
</feature>
<feature type="transmembrane region" description="Helical" evidence="2">
    <location>
        <begin position="202"/>
        <end position="222"/>
    </location>
</feature>
<feature type="transmembrane region" description="Helical" evidence="2">
    <location>
        <begin position="223"/>
        <end position="243"/>
    </location>
</feature>
<reference key="1">
    <citation type="journal article" date="2000" name="Mol. Gen. Genet.">
        <title>The mitochondrial DNA of Dictyostelium discoideum: complete sequence, gene content and genome organization.</title>
        <authorList>
            <person name="Ogawa S."/>
            <person name="Yoshino R."/>
            <person name="Angata K."/>
            <person name="Iwamoto M."/>
            <person name="Pi M."/>
            <person name="Kuroe K."/>
            <person name="Matsuo K."/>
            <person name="Morio T."/>
            <person name="Urushihara H."/>
            <person name="Yanagisawa K."/>
            <person name="Tanaka Y."/>
        </authorList>
    </citation>
    <scope>NUCLEOTIDE SEQUENCE [LARGE SCALE GENOMIC DNA]</scope>
    <source>
        <strain>AX3</strain>
    </source>
</reference>
<reference key="2">
    <citation type="journal article" date="1998" name="Curr. Genet.">
        <title>A ribosomal protein gene cluster is encoded in the mitochondrial DNA of Dictyostelium discoideum: UGA termination codons and similarity of gene order to Acanthamoeba castellanii.</title>
        <authorList>
            <person name="Iwamoto M."/>
            <person name="Pi M."/>
            <person name="Kurihara M."/>
            <person name="Morio T."/>
            <person name="Tanaka Y."/>
        </authorList>
    </citation>
    <scope>NUCLEOTIDE SEQUENCE [GENOMIC DNA] OF 134-244</scope>
    <source>
        <strain>AX3</strain>
    </source>
</reference>
<keyword id="KW-0066">ATP synthesis</keyword>
<keyword id="KW-0138">CF(0)</keyword>
<keyword id="KW-0375">Hydrogen ion transport</keyword>
<keyword id="KW-0406">Ion transport</keyword>
<keyword id="KW-0472">Membrane</keyword>
<keyword id="KW-0496">Mitochondrion</keyword>
<keyword id="KW-0999">Mitochondrion inner membrane</keyword>
<keyword id="KW-1185">Reference proteome</keyword>
<keyword id="KW-0812">Transmembrane</keyword>
<keyword id="KW-1133">Transmembrane helix</keyword>
<keyword id="KW-0813">Transport</keyword>
<geneLocation type="mitochondrion"/>
<protein>
    <recommendedName>
        <fullName>ATP synthase subunit a</fullName>
    </recommendedName>
    <alternativeName>
        <fullName>F-ATPase protein 6</fullName>
    </alternativeName>
</protein>
<proteinExistence type="inferred from homology"/>
<accession>Q27559</accession>
<accession>Q9XPJ7</accession>
<sequence length="244" mass="27802">MKSLFEQFEIDLYCIIITRFFDISITTITVYLGLLMVIVIGMYKVSLYKATIIGGNNWQHIGEMIYEFVVDLIIEQVGKPGILFFPFIMSLFLFVLTLNVMGLIPLSFTVTGQLLVTFTLAITIMIGITIWGFRIHGIKFLNIFVPSGIEPWLLPLLVFIEIMSYVLRPISLAVRLFANMLAGHLLIHIIGVAAIYLMQFYFIGILPWICVIAFMFLELGIAFLQAYVFVLLTLIYIANIINLH</sequence>
<name>ATP6_DICDI</name>
<evidence type="ECO:0000250" key="1"/>
<evidence type="ECO:0000255" key="2"/>
<evidence type="ECO:0000305" key="3"/>
<organism>
    <name type="scientific">Dictyostelium discoideum</name>
    <name type="common">Social amoeba</name>
    <dbReference type="NCBI Taxonomy" id="44689"/>
    <lineage>
        <taxon>Eukaryota</taxon>
        <taxon>Amoebozoa</taxon>
        <taxon>Evosea</taxon>
        <taxon>Eumycetozoa</taxon>
        <taxon>Dictyostelia</taxon>
        <taxon>Dictyosteliales</taxon>
        <taxon>Dictyosteliaceae</taxon>
        <taxon>Dictyostelium</taxon>
    </lineage>
</organism>
<dbReference type="EMBL" id="AB000109">
    <property type="protein sequence ID" value="BAA78068.1"/>
    <property type="molecule type" value="Genomic_DNA"/>
</dbReference>
<dbReference type="EMBL" id="D21196">
    <property type="protein sequence ID" value="BAA04732.1"/>
    <property type="molecule type" value="Genomic_DNA"/>
</dbReference>
<dbReference type="PIR" id="T43764">
    <property type="entry name" value="T43764"/>
</dbReference>
<dbReference type="RefSeq" id="NP_050086.1">
    <property type="nucleotide sequence ID" value="NC_000895.1"/>
</dbReference>
<dbReference type="SMR" id="Q27559"/>
<dbReference type="FunCoup" id="Q27559">
    <property type="interactions" value="12"/>
</dbReference>
<dbReference type="STRING" id="44689.Q27559"/>
<dbReference type="GeneID" id="2193914"/>
<dbReference type="KEGG" id="ddi:DidioMp19"/>
<dbReference type="dictyBase" id="DDB_G0294014">
    <property type="gene designation" value="atp6"/>
</dbReference>
<dbReference type="VEuPathDB" id="AmoebaDB:DidioMp19"/>
<dbReference type="InParanoid" id="Q27559"/>
<dbReference type="OMA" id="FFDQFMS"/>
<dbReference type="PhylomeDB" id="Q27559"/>
<dbReference type="Reactome" id="R-DDI-9837999">
    <property type="pathway name" value="Mitochondrial protein degradation"/>
</dbReference>
<dbReference type="PRO" id="PR:Q27559"/>
<dbReference type="Proteomes" id="UP000002195">
    <property type="component" value="Mitochondrion"/>
</dbReference>
<dbReference type="GO" id="GO:0005743">
    <property type="term" value="C:mitochondrial inner membrane"/>
    <property type="evidence" value="ECO:0007669"/>
    <property type="project" value="UniProtKB-SubCell"/>
</dbReference>
<dbReference type="GO" id="GO:0045259">
    <property type="term" value="C:proton-transporting ATP synthase complex"/>
    <property type="evidence" value="ECO:0000318"/>
    <property type="project" value="GO_Central"/>
</dbReference>
<dbReference type="GO" id="GO:0015078">
    <property type="term" value="F:proton transmembrane transporter activity"/>
    <property type="evidence" value="ECO:0007669"/>
    <property type="project" value="InterPro"/>
</dbReference>
<dbReference type="GO" id="GO:0015986">
    <property type="term" value="P:proton motive force-driven ATP synthesis"/>
    <property type="evidence" value="ECO:0000318"/>
    <property type="project" value="GO_Central"/>
</dbReference>
<dbReference type="CDD" id="cd00310">
    <property type="entry name" value="ATP-synt_Fo_a_6"/>
    <property type="match status" value="1"/>
</dbReference>
<dbReference type="FunFam" id="1.20.120.220:FF:000003">
    <property type="entry name" value="ATP synthase subunit a"/>
    <property type="match status" value="1"/>
</dbReference>
<dbReference type="Gene3D" id="1.20.120.220">
    <property type="entry name" value="ATP synthase, F0 complex, subunit A"/>
    <property type="match status" value="1"/>
</dbReference>
<dbReference type="HAMAP" id="MF_01393">
    <property type="entry name" value="ATP_synth_a_bact"/>
    <property type="match status" value="1"/>
</dbReference>
<dbReference type="InterPro" id="IPR000568">
    <property type="entry name" value="ATP_synth_F0_asu"/>
</dbReference>
<dbReference type="InterPro" id="IPR023011">
    <property type="entry name" value="ATP_synth_F0_asu_AS"/>
</dbReference>
<dbReference type="InterPro" id="IPR045083">
    <property type="entry name" value="ATP_synth_F0_asu_bact/mt"/>
</dbReference>
<dbReference type="InterPro" id="IPR035908">
    <property type="entry name" value="F0_ATP_A_sf"/>
</dbReference>
<dbReference type="NCBIfam" id="TIGR01131">
    <property type="entry name" value="ATP_synt_6_or_A"/>
    <property type="match status" value="1"/>
</dbReference>
<dbReference type="NCBIfam" id="NF004482">
    <property type="entry name" value="PRK05815.2-4"/>
    <property type="match status" value="1"/>
</dbReference>
<dbReference type="PANTHER" id="PTHR11410">
    <property type="entry name" value="ATP SYNTHASE SUBUNIT A"/>
    <property type="match status" value="1"/>
</dbReference>
<dbReference type="PANTHER" id="PTHR11410:SF0">
    <property type="entry name" value="ATP SYNTHASE SUBUNIT A"/>
    <property type="match status" value="1"/>
</dbReference>
<dbReference type="Pfam" id="PF00119">
    <property type="entry name" value="ATP-synt_A"/>
    <property type="match status" value="1"/>
</dbReference>
<dbReference type="PRINTS" id="PR00123">
    <property type="entry name" value="ATPASEA"/>
</dbReference>
<dbReference type="SUPFAM" id="SSF81336">
    <property type="entry name" value="F1F0 ATP synthase subunit A"/>
    <property type="match status" value="1"/>
</dbReference>
<dbReference type="PROSITE" id="PS00449">
    <property type="entry name" value="ATPASE_A"/>
    <property type="match status" value="1"/>
</dbReference>
<comment type="function">
    <text evidence="1">Mitochondrial membrane ATP synthase (F(1)F(0) ATP synthase or Complex V) produces ATP from ADP in the presence of a proton gradient across the membrane which is generated by electron transport complexes of the respiratory chain. F-type ATPases consist of two structural domains, F(1) - containing the extramembraneous catalytic core and F(0) - containing the membrane proton channel, linked together by a central stalk and a peripheral stalk. During catalysis, ATP synthesis in the catalytic domain of F(1) is coupled via a rotary mechanism of the central stalk subunits to proton translocation. Key component of the proton channel; it may play a direct role in the translocation of protons across the membrane (By similarity).</text>
</comment>
<comment type="subunit">
    <text evidence="1">F-type ATPases have 2 components, CF(1) - the catalytic core - and CF(0) - the membrane proton channel. CF(1) has five subunits: alpha(3), beta(3), gamma(1), delta(1), epsilon(1). CF(0) has three main subunits: a, b and c (By similarity).</text>
</comment>
<comment type="subcellular location">
    <subcellularLocation>
        <location evidence="1">Mitochondrion inner membrane</location>
        <topology evidence="1">Multi-pass membrane protein</topology>
    </subcellularLocation>
</comment>
<comment type="similarity">
    <text evidence="3">Belongs to the ATPase A chain family.</text>
</comment>